<gene>
    <name evidence="1" type="primary">aroK</name>
    <name type="ordered locus">TC_0646</name>
</gene>
<organism>
    <name type="scientific">Chlamydia muridarum (strain MoPn / Nigg)</name>
    <dbReference type="NCBI Taxonomy" id="243161"/>
    <lineage>
        <taxon>Bacteria</taxon>
        <taxon>Pseudomonadati</taxon>
        <taxon>Chlamydiota</taxon>
        <taxon>Chlamydiia</taxon>
        <taxon>Chlamydiales</taxon>
        <taxon>Chlamydiaceae</taxon>
        <taxon>Chlamydia/Chlamydophila group</taxon>
        <taxon>Chlamydia</taxon>
    </lineage>
</organism>
<proteinExistence type="inferred from homology"/>
<comment type="function">
    <text evidence="1">Catalyzes the specific phosphorylation of the 3-hydroxyl group of shikimic acid using ATP as a cosubstrate.</text>
</comment>
<comment type="catalytic activity">
    <reaction evidence="1">
        <text>shikimate + ATP = 3-phosphoshikimate + ADP + H(+)</text>
        <dbReference type="Rhea" id="RHEA:13121"/>
        <dbReference type="ChEBI" id="CHEBI:15378"/>
        <dbReference type="ChEBI" id="CHEBI:30616"/>
        <dbReference type="ChEBI" id="CHEBI:36208"/>
        <dbReference type="ChEBI" id="CHEBI:145989"/>
        <dbReference type="ChEBI" id="CHEBI:456216"/>
        <dbReference type="EC" id="2.7.1.71"/>
    </reaction>
</comment>
<comment type="cofactor">
    <cofactor evidence="1">
        <name>Mg(2+)</name>
        <dbReference type="ChEBI" id="CHEBI:18420"/>
    </cofactor>
    <text evidence="1">Binds 1 Mg(2+) ion per subunit.</text>
</comment>
<comment type="pathway">
    <text evidence="1">Metabolic intermediate biosynthesis; chorismate biosynthesis; chorismate from D-erythrose 4-phosphate and phosphoenolpyruvate: step 5/7.</text>
</comment>
<comment type="subunit">
    <text evidence="1">Monomer.</text>
</comment>
<comment type="subcellular location">
    <subcellularLocation>
        <location evidence="1">Cytoplasm</location>
    </subcellularLocation>
</comment>
<comment type="similarity">
    <text evidence="1">Belongs to the shikimate kinase family.</text>
</comment>
<accession>Q9PK27</accession>
<feature type="chain" id="PRO_0000192372" description="Shikimate kinase">
    <location>
        <begin position="1"/>
        <end position="184"/>
    </location>
</feature>
<feature type="binding site" evidence="1">
    <location>
        <begin position="17"/>
        <end position="22"/>
    </location>
    <ligand>
        <name>ATP</name>
        <dbReference type="ChEBI" id="CHEBI:30616"/>
    </ligand>
</feature>
<feature type="binding site" evidence="1">
    <location>
        <position position="21"/>
    </location>
    <ligand>
        <name>Mg(2+)</name>
        <dbReference type="ChEBI" id="CHEBI:18420"/>
    </ligand>
</feature>
<feature type="binding site" evidence="1">
    <location>
        <position position="39"/>
    </location>
    <ligand>
        <name>substrate</name>
    </ligand>
</feature>
<feature type="binding site" evidence="1">
    <location>
        <position position="85"/>
    </location>
    <ligand>
        <name>substrate</name>
    </ligand>
</feature>
<dbReference type="EC" id="2.7.1.71" evidence="1"/>
<dbReference type="EMBL" id="AE002160">
    <property type="protein sequence ID" value="AAF39473.1"/>
    <property type="molecule type" value="Genomic_DNA"/>
</dbReference>
<dbReference type="PIR" id="E81679">
    <property type="entry name" value="E81679"/>
</dbReference>
<dbReference type="RefSeq" id="WP_010231096.1">
    <property type="nucleotide sequence ID" value="NZ_CP063055.1"/>
</dbReference>
<dbReference type="SMR" id="Q9PK27"/>
<dbReference type="GeneID" id="1246007"/>
<dbReference type="KEGG" id="cmu:TC_0646"/>
<dbReference type="eggNOG" id="COG0703">
    <property type="taxonomic scope" value="Bacteria"/>
</dbReference>
<dbReference type="HOGENOM" id="CLU_057607_5_0_0"/>
<dbReference type="OrthoDB" id="9800332at2"/>
<dbReference type="UniPathway" id="UPA00053">
    <property type="reaction ID" value="UER00088"/>
</dbReference>
<dbReference type="Proteomes" id="UP000000800">
    <property type="component" value="Chromosome"/>
</dbReference>
<dbReference type="GO" id="GO:0005829">
    <property type="term" value="C:cytosol"/>
    <property type="evidence" value="ECO:0007669"/>
    <property type="project" value="TreeGrafter"/>
</dbReference>
<dbReference type="GO" id="GO:0005524">
    <property type="term" value="F:ATP binding"/>
    <property type="evidence" value="ECO:0007669"/>
    <property type="project" value="UniProtKB-UniRule"/>
</dbReference>
<dbReference type="GO" id="GO:0000287">
    <property type="term" value="F:magnesium ion binding"/>
    <property type="evidence" value="ECO:0007669"/>
    <property type="project" value="UniProtKB-UniRule"/>
</dbReference>
<dbReference type="GO" id="GO:0004765">
    <property type="term" value="F:shikimate kinase activity"/>
    <property type="evidence" value="ECO:0007669"/>
    <property type="project" value="UniProtKB-UniRule"/>
</dbReference>
<dbReference type="GO" id="GO:0008652">
    <property type="term" value="P:amino acid biosynthetic process"/>
    <property type="evidence" value="ECO:0007669"/>
    <property type="project" value="UniProtKB-KW"/>
</dbReference>
<dbReference type="GO" id="GO:0009073">
    <property type="term" value="P:aromatic amino acid family biosynthetic process"/>
    <property type="evidence" value="ECO:0007669"/>
    <property type="project" value="UniProtKB-KW"/>
</dbReference>
<dbReference type="GO" id="GO:0009423">
    <property type="term" value="P:chorismate biosynthetic process"/>
    <property type="evidence" value="ECO:0007669"/>
    <property type="project" value="UniProtKB-UniRule"/>
</dbReference>
<dbReference type="CDD" id="cd00464">
    <property type="entry name" value="SK"/>
    <property type="match status" value="1"/>
</dbReference>
<dbReference type="Gene3D" id="3.40.50.300">
    <property type="entry name" value="P-loop containing nucleotide triphosphate hydrolases"/>
    <property type="match status" value="1"/>
</dbReference>
<dbReference type="HAMAP" id="MF_00109">
    <property type="entry name" value="Shikimate_kinase"/>
    <property type="match status" value="1"/>
</dbReference>
<dbReference type="InterPro" id="IPR027417">
    <property type="entry name" value="P-loop_NTPase"/>
</dbReference>
<dbReference type="InterPro" id="IPR031322">
    <property type="entry name" value="Shikimate/glucono_kinase"/>
</dbReference>
<dbReference type="InterPro" id="IPR000623">
    <property type="entry name" value="Shikimate_kinase/TSH1"/>
</dbReference>
<dbReference type="NCBIfam" id="NF001866">
    <property type="entry name" value="PRK00625.1"/>
    <property type="match status" value="1"/>
</dbReference>
<dbReference type="PANTHER" id="PTHR21087">
    <property type="entry name" value="SHIKIMATE KINASE"/>
    <property type="match status" value="1"/>
</dbReference>
<dbReference type="PANTHER" id="PTHR21087:SF16">
    <property type="entry name" value="SHIKIMATE KINASE 1, CHLOROPLASTIC"/>
    <property type="match status" value="1"/>
</dbReference>
<dbReference type="Pfam" id="PF01202">
    <property type="entry name" value="SKI"/>
    <property type="match status" value="1"/>
</dbReference>
<dbReference type="PRINTS" id="PR01100">
    <property type="entry name" value="SHIKIMTKNASE"/>
</dbReference>
<dbReference type="SUPFAM" id="SSF52540">
    <property type="entry name" value="P-loop containing nucleoside triphosphate hydrolases"/>
    <property type="match status" value="1"/>
</dbReference>
<keyword id="KW-0028">Amino-acid biosynthesis</keyword>
<keyword id="KW-0057">Aromatic amino acid biosynthesis</keyword>
<keyword id="KW-0067">ATP-binding</keyword>
<keyword id="KW-0963">Cytoplasm</keyword>
<keyword id="KW-0418">Kinase</keyword>
<keyword id="KW-0460">Magnesium</keyword>
<keyword id="KW-0479">Metal-binding</keyword>
<keyword id="KW-0547">Nucleotide-binding</keyword>
<keyword id="KW-0808">Transferase</keyword>
<sequence length="184" mass="20805">MPTFDTTKQIFLCGLPSVGKTSFGRLLAQFLSLPFFDTDHLLSARFHGDSPKAIYQRFGEEGFCQEELLTLINLPVIPSVVALGGKTLLDKQIYEHITQRENILLVLLDLPFATLYQRLQKKPLPESLKNTPSLENALFQRLEKLRLLTPHIFSLQAATSLHEIGEVCQSFCLQFLTAQEIPYA</sequence>
<name>AROK_CHLMU</name>
<protein>
    <recommendedName>
        <fullName evidence="1">Shikimate kinase</fullName>
        <shortName evidence="1">SK</shortName>
        <ecNumber evidence="1">2.7.1.71</ecNumber>
    </recommendedName>
</protein>
<evidence type="ECO:0000255" key="1">
    <source>
        <dbReference type="HAMAP-Rule" id="MF_00109"/>
    </source>
</evidence>
<reference key="1">
    <citation type="journal article" date="2000" name="Nucleic Acids Res.">
        <title>Genome sequences of Chlamydia trachomatis MoPn and Chlamydia pneumoniae AR39.</title>
        <authorList>
            <person name="Read T.D."/>
            <person name="Brunham R.C."/>
            <person name="Shen C."/>
            <person name="Gill S.R."/>
            <person name="Heidelberg J.F."/>
            <person name="White O."/>
            <person name="Hickey E.K."/>
            <person name="Peterson J.D."/>
            <person name="Utterback T.R."/>
            <person name="Berry K.J."/>
            <person name="Bass S."/>
            <person name="Linher K.D."/>
            <person name="Weidman J.F."/>
            <person name="Khouri H.M."/>
            <person name="Craven B."/>
            <person name="Bowman C."/>
            <person name="Dodson R.J."/>
            <person name="Gwinn M.L."/>
            <person name="Nelson W.C."/>
            <person name="DeBoy R.T."/>
            <person name="Kolonay J.F."/>
            <person name="McClarty G."/>
            <person name="Salzberg S.L."/>
            <person name="Eisen J.A."/>
            <person name="Fraser C.M."/>
        </authorList>
    </citation>
    <scope>NUCLEOTIDE SEQUENCE [LARGE SCALE GENOMIC DNA]</scope>
    <source>
        <strain>MoPn / Nigg</strain>
    </source>
</reference>